<gene>
    <name evidence="1" type="primary">rplU</name>
    <name type="ordered locus">LAR_1124</name>
</gene>
<name>RL21_LIMRJ</name>
<accession>B2G858</accession>
<organism>
    <name type="scientific">Limosilactobacillus reuteri subsp. reuteri (strain JCM 1112)</name>
    <name type="common">Lactobacillus reuteri</name>
    <dbReference type="NCBI Taxonomy" id="557433"/>
    <lineage>
        <taxon>Bacteria</taxon>
        <taxon>Bacillati</taxon>
        <taxon>Bacillota</taxon>
        <taxon>Bacilli</taxon>
        <taxon>Lactobacillales</taxon>
        <taxon>Lactobacillaceae</taxon>
        <taxon>Limosilactobacillus</taxon>
    </lineage>
</organism>
<comment type="function">
    <text evidence="1">This protein binds to 23S rRNA in the presence of protein L20.</text>
</comment>
<comment type="subunit">
    <text evidence="1">Part of the 50S ribosomal subunit. Contacts protein L20.</text>
</comment>
<comment type="similarity">
    <text evidence="1">Belongs to the bacterial ribosomal protein bL21 family.</text>
</comment>
<evidence type="ECO:0000255" key="1">
    <source>
        <dbReference type="HAMAP-Rule" id="MF_01363"/>
    </source>
</evidence>
<evidence type="ECO:0000256" key="2">
    <source>
        <dbReference type="SAM" id="MobiDB-lite"/>
    </source>
</evidence>
<evidence type="ECO:0000305" key="3"/>
<reference key="1">
    <citation type="journal article" date="2008" name="DNA Res.">
        <title>Comparative genome analysis of Lactobacillus reuteri and Lactobacillus fermentum reveal a genomic island for reuterin and cobalamin production.</title>
        <authorList>
            <person name="Morita H."/>
            <person name="Toh H."/>
            <person name="Fukuda S."/>
            <person name="Horikawa H."/>
            <person name="Oshima K."/>
            <person name="Suzuki T."/>
            <person name="Murakami M."/>
            <person name="Hisamatsu S."/>
            <person name="Kato Y."/>
            <person name="Takizawa T."/>
            <person name="Fukuoka H."/>
            <person name="Yoshimura T."/>
            <person name="Itoh K."/>
            <person name="O'Sullivan D.J."/>
            <person name="McKay L.L."/>
            <person name="Ohno H."/>
            <person name="Kikuchi J."/>
            <person name="Masaoka T."/>
            <person name="Hattori M."/>
        </authorList>
    </citation>
    <scope>NUCLEOTIDE SEQUENCE [LARGE SCALE GENOMIC DNA]</scope>
    <source>
        <strain>JCM 1112</strain>
    </source>
</reference>
<keyword id="KW-0687">Ribonucleoprotein</keyword>
<keyword id="KW-0689">Ribosomal protein</keyword>
<keyword id="KW-0694">RNA-binding</keyword>
<keyword id="KW-0699">rRNA-binding</keyword>
<sequence length="102" mass="11256">MYAIIVTGGKQYKVEEGASIYVEKLDAKEGDKVTFDQVIFVGGDDTKIGTPVVDGASVEGTVDKQGKEKKVVTFKYKPKKHTHTKQGHRQPYTKVTINKINA</sequence>
<feature type="chain" id="PRO_1000143814" description="Large ribosomal subunit protein bL21">
    <location>
        <begin position="1"/>
        <end position="102"/>
    </location>
</feature>
<feature type="region of interest" description="Disordered" evidence="2">
    <location>
        <begin position="77"/>
        <end position="102"/>
    </location>
</feature>
<feature type="compositionally biased region" description="Basic residues" evidence="2">
    <location>
        <begin position="77"/>
        <end position="88"/>
    </location>
</feature>
<feature type="compositionally biased region" description="Polar residues" evidence="2">
    <location>
        <begin position="93"/>
        <end position="102"/>
    </location>
</feature>
<dbReference type="EMBL" id="AP007281">
    <property type="protein sequence ID" value="BAG25640.1"/>
    <property type="molecule type" value="Genomic_DNA"/>
</dbReference>
<dbReference type="RefSeq" id="WP_003664009.1">
    <property type="nucleotide sequence ID" value="NC_010609.1"/>
</dbReference>
<dbReference type="SMR" id="B2G858"/>
<dbReference type="GeneID" id="77191861"/>
<dbReference type="KEGG" id="lrf:LAR_1124"/>
<dbReference type="HOGENOM" id="CLU_061463_3_1_9"/>
<dbReference type="GO" id="GO:0005737">
    <property type="term" value="C:cytoplasm"/>
    <property type="evidence" value="ECO:0007669"/>
    <property type="project" value="UniProtKB-ARBA"/>
</dbReference>
<dbReference type="GO" id="GO:1990904">
    <property type="term" value="C:ribonucleoprotein complex"/>
    <property type="evidence" value="ECO:0007669"/>
    <property type="project" value="UniProtKB-KW"/>
</dbReference>
<dbReference type="GO" id="GO:0005840">
    <property type="term" value="C:ribosome"/>
    <property type="evidence" value="ECO:0007669"/>
    <property type="project" value="UniProtKB-KW"/>
</dbReference>
<dbReference type="GO" id="GO:0019843">
    <property type="term" value="F:rRNA binding"/>
    <property type="evidence" value="ECO:0007669"/>
    <property type="project" value="UniProtKB-UniRule"/>
</dbReference>
<dbReference type="GO" id="GO:0003735">
    <property type="term" value="F:structural constituent of ribosome"/>
    <property type="evidence" value="ECO:0007669"/>
    <property type="project" value="InterPro"/>
</dbReference>
<dbReference type="GO" id="GO:0006412">
    <property type="term" value="P:translation"/>
    <property type="evidence" value="ECO:0007669"/>
    <property type="project" value="UniProtKB-UniRule"/>
</dbReference>
<dbReference type="HAMAP" id="MF_01363">
    <property type="entry name" value="Ribosomal_bL21"/>
    <property type="match status" value="1"/>
</dbReference>
<dbReference type="InterPro" id="IPR028909">
    <property type="entry name" value="bL21-like"/>
</dbReference>
<dbReference type="InterPro" id="IPR036164">
    <property type="entry name" value="bL21-like_sf"/>
</dbReference>
<dbReference type="InterPro" id="IPR001787">
    <property type="entry name" value="Ribosomal_bL21"/>
</dbReference>
<dbReference type="InterPro" id="IPR018258">
    <property type="entry name" value="Ribosomal_bL21_CS"/>
</dbReference>
<dbReference type="NCBIfam" id="TIGR00061">
    <property type="entry name" value="L21"/>
    <property type="match status" value="1"/>
</dbReference>
<dbReference type="PANTHER" id="PTHR21349">
    <property type="entry name" value="50S RIBOSOMAL PROTEIN L21"/>
    <property type="match status" value="1"/>
</dbReference>
<dbReference type="PANTHER" id="PTHR21349:SF0">
    <property type="entry name" value="LARGE RIBOSOMAL SUBUNIT PROTEIN BL21M"/>
    <property type="match status" value="1"/>
</dbReference>
<dbReference type="Pfam" id="PF00829">
    <property type="entry name" value="Ribosomal_L21p"/>
    <property type="match status" value="1"/>
</dbReference>
<dbReference type="SUPFAM" id="SSF141091">
    <property type="entry name" value="L21p-like"/>
    <property type="match status" value="1"/>
</dbReference>
<dbReference type="PROSITE" id="PS01169">
    <property type="entry name" value="RIBOSOMAL_L21"/>
    <property type="match status" value="1"/>
</dbReference>
<proteinExistence type="inferred from homology"/>
<protein>
    <recommendedName>
        <fullName evidence="1">Large ribosomal subunit protein bL21</fullName>
    </recommendedName>
    <alternativeName>
        <fullName evidence="3">50S ribosomal protein L21</fullName>
    </alternativeName>
</protein>